<gene>
    <name evidence="1" type="primary">mscL</name>
    <name type="ordered locus">Gmet_2522</name>
</gene>
<accession>Q39SN1</accession>
<keyword id="KW-0997">Cell inner membrane</keyword>
<keyword id="KW-1003">Cell membrane</keyword>
<keyword id="KW-0407">Ion channel</keyword>
<keyword id="KW-0406">Ion transport</keyword>
<keyword id="KW-0472">Membrane</keyword>
<keyword id="KW-1185">Reference proteome</keyword>
<keyword id="KW-0812">Transmembrane</keyword>
<keyword id="KW-1133">Transmembrane helix</keyword>
<keyword id="KW-0813">Transport</keyword>
<name>MSCL_GEOMG</name>
<comment type="function">
    <text evidence="1">Channel that opens in response to stretch forces in the membrane lipid bilayer. May participate in the regulation of osmotic pressure changes within the cell.</text>
</comment>
<comment type="subunit">
    <text evidence="1">Homopentamer.</text>
</comment>
<comment type="subcellular location">
    <subcellularLocation>
        <location evidence="1">Cell inner membrane</location>
        <topology evidence="1">Multi-pass membrane protein</topology>
    </subcellularLocation>
</comment>
<comment type="similarity">
    <text evidence="1">Belongs to the MscL family.</text>
</comment>
<protein>
    <recommendedName>
        <fullName evidence="1">Large-conductance mechanosensitive channel</fullName>
    </recommendedName>
</protein>
<evidence type="ECO:0000255" key="1">
    <source>
        <dbReference type="HAMAP-Rule" id="MF_00115"/>
    </source>
</evidence>
<proteinExistence type="inferred from homology"/>
<reference key="1">
    <citation type="journal article" date="2009" name="BMC Microbiol.">
        <title>The genome sequence of Geobacter metallireducens: features of metabolism, physiology and regulation common and dissimilar to Geobacter sulfurreducens.</title>
        <authorList>
            <person name="Aklujkar M."/>
            <person name="Krushkal J."/>
            <person name="DiBartolo G."/>
            <person name="Lapidus A."/>
            <person name="Land M.L."/>
            <person name="Lovley D.R."/>
        </authorList>
    </citation>
    <scope>NUCLEOTIDE SEQUENCE [LARGE SCALE GENOMIC DNA]</scope>
    <source>
        <strain>ATCC 53774 / DSM 7210 / GS-15</strain>
    </source>
</reference>
<dbReference type="EMBL" id="CP000148">
    <property type="protein sequence ID" value="ABB32743.1"/>
    <property type="molecule type" value="Genomic_DNA"/>
</dbReference>
<dbReference type="SMR" id="Q39SN1"/>
<dbReference type="STRING" id="269799.Gmet_2522"/>
<dbReference type="KEGG" id="gme:Gmet_2522"/>
<dbReference type="eggNOG" id="COG1970">
    <property type="taxonomic scope" value="Bacteria"/>
</dbReference>
<dbReference type="HOGENOM" id="CLU_095787_2_3_7"/>
<dbReference type="Proteomes" id="UP000007073">
    <property type="component" value="Chromosome"/>
</dbReference>
<dbReference type="GO" id="GO:0005886">
    <property type="term" value="C:plasma membrane"/>
    <property type="evidence" value="ECO:0007669"/>
    <property type="project" value="UniProtKB-SubCell"/>
</dbReference>
<dbReference type="GO" id="GO:0008381">
    <property type="term" value="F:mechanosensitive monoatomic ion channel activity"/>
    <property type="evidence" value="ECO:0007669"/>
    <property type="project" value="UniProtKB-UniRule"/>
</dbReference>
<dbReference type="Gene3D" id="1.10.1200.120">
    <property type="entry name" value="Large-conductance mechanosensitive channel, MscL, domain 1"/>
    <property type="match status" value="1"/>
</dbReference>
<dbReference type="HAMAP" id="MF_00115">
    <property type="entry name" value="MscL"/>
    <property type="match status" value="1"/>
</dbReference>
<dbReference type="InterPro" id="IPR019823">
    <property type="entry name" value="Mechanosensitive_channel_CS"/>
</dbReference>
<dbReference type="InterPro" id="IPR001185">
    <property type="entry name" value="MS_channel"/>
</dbReference>
<dbReference type="InterPro" id="IPR037673">
    <property type="entry name" value="MSC/AndL"/>
</dbReference>
<dbReference type="InterPro" id="IPR036019">
    <property type="entry name" value="MscL_channel"/>
</dbReference>
<dbReference type="NCBIfam" id="TIGR00220">
    <property type="entry name" value="mscL"/>
    <property type="match status" value="1"/>
</dbReference>
<dbReference type="NCBIfam" id="NF001843">
    <property type="entry name" value="PRK00567.1-4"/>
    <property type="match status" value="1"/>
</dbReference>
<dbReference type="NCBIfam" id="NF010557">
    <property type="entry name" value="PRK13952.1"/>
    <property type="match status" value="1"/>
</dbReference>
<dbReference type="PANTHER" id="PTHR30266:SF2">
    <property type="entry name" value="LARGE-CONDUCTANCE MECHANOSENSITIVE CHANNEL"/>
    <property type="match status" value="1"/>
</dbReference>
<dbReference type="PANTHER" id="PTHR30266">
    <property type="entry name" value="MECHANOSENSITIVE CHANNEL MSCL"/>
    <property type="match status" value="1"/>
</dbReference>
<dbReference type="Pfam" id="PF01741">
    <property type="entry name" value="MscL"/>
    <property type="match status" value="1"/>
</dbReference>
<dbReference type="PRINTS" id="PR01264">
    <property type="entry name" value="MECHCHANNEL"/>
</dbReference>
<dbReference type="SUPFAM" id="SSF81330">
    <property type="entry name" value="Gated mechanosensitive channel"/>
    <property type="match status" value="1"/>
</dbReference>
<dbReference type="PROSITE" id="PS01327">
    <property type="entry name" value="MSCL"/>
    <property type="match status" value="1"/>
</dbReference>
<feature type="chain" id="PRO_0000238002" description="Large-conductance mechanosensitive channel">
    <location>
        <begin position="1"/>
        <end position="145"/>
    </location>
</feature>
<feature type="transmembrane region" description="Helical" evidence="1">
    <location>
        <begin position="16"/>
        <end position="36"/>
    </location>
</feature>
<feature type="transmembrane region" description="Helical" evidence="1">
    <location>
        <begin position="83"/>
        <end position="103"/>
    </location>
</feature>
<organism>
    <name type="scientific">Geobacter metallireducens (strain ATCC 53774 / DSM 7210 / GS-15)</name>
    <dbReference type="NCBI Taxonomy" id="269799"/>
    <lineage>
        <taxon>Bacteria</taxon>
        <taxon>Pseudomonadati</taxon>
        <taxon>Thermodesulfobacteriota</taxon>
        <taxon>Desulfuromonadia</taxon>
        <taxon>Geobacterales</taxon>
        <taxon>Geobacteraceae</taxon>
        <taxon>Geobacter</taxon>
    </lineage>
</organism>
<sequence length="145" mass="15602">MGMMEEFKEFAVKGNVVDLAVGVIIGGAFGKIVTSFVSDIVMPPLGLIMGKVNFTDLFINLSGKPFDSLKAAKDAGAPVISYGVFINTLIDFIIIAFVIFMVIKQINRFKKEPAPAPPNTKECPHCLSAVPIKATKCAFCTSDIK</sequence>